<feature type="chain" id="PRO_1000093302" description="S-ribosylhomocysteine lyase">
    <location>
        <begin position="1"/>
        <end position="164"/>
    </location>
</feature>
<feature type="binding site" evidence="1">
    <location>
        <position position="61"/>
    </location>
    <ligand>
        <name>Fe cation</name>
        <dbReference type="ChEBI" id="CHEBI:24875"/>
    </ligand>
</feature>
<feature type="binding site" evidence="1">
    <location>
        <position position="65"/>
    </location>
    <ligand>
        <name>Fe cation</name>
        <dbReference type="ChEBI" id="CHEBI:24875"/>
    </ligand>
</feature>
<feature type="binding site" evidence="1">
    <location>
        <position position="131"/>
    </location>
    <ligand>
        <name>Fe cation</name>
        <dbReference type="ChEBI" id="CHEBI:24875"/>
    </ligand>
</feature>
<proteinExistence type="inferred from homology"/>
<comment type="function">
    <text evidence="1">Involved in the synthesis of autoinducer 2 (AI-2) which is secreted by bacteria and is used to communicate both the cell density and the metabolic potential of the environment. The regulation of gene expression in response to changes in cell density is called quorum sensing. Catalyzes the transformation of S-ribosylhomocysteine (RHC) to homocysteine (HC) and 4,5-dihydroxy-2,3-pentadione (DPD).</text>
</comment>
<comment type="catalytic activity">
    <reaction evidence="1">
        <text>S-(5-deoxy-D-ribos-5-yl)-L-homocysteine = (S)-4,5-dihydroxypentane-2,3-dione + L-homocysteine</text>
        <dbReference type="Rhea" id="RHEA:17753"/>
        <dbReference type="ChEBI" id="CHEBI:29484"/>
        <dbReference type="ChEBI" id="CHEBI:58195"/>
        <dbReference type="ChEBI" id="CHEBI:58199"/>
        <dbReference type="EC" id="4.4.1.21"/>
    </reaction>
</comment>
<comment type="cofactor">
    <cofactor evidence="1">
        <name>Fe cation</name>
        <dbReference type="ChEBI" id="CHEBI:24875"/>
    </cofactor>
    <text evidence="1">Binds 1 Fe cation per subunit.</text>
</comment>
<comment type="subunit">
    <text evidence="1">Homodimer.</text>
</comment>
<comment type="similarity">
    <text evidence="1">Belongs to the LuxS family.</text>
</comment>
<evidence type="ECO:0000255" key="1">
    <source>
        <dbReference type="HAMAP-Rule" id="MF_00091"/>
    </source>
</evidence>
<dbReference type="EC" id="4.4.1.21" evidence="1"/>
<dbReference type="EMBL" id="CP000605">
    <property type="protein sequence ID" value="ACD98356.1"/>
    <property type="molecule type" value="Genomic_DNA"/>
</dbReference>
<dbReference type="RefSeq" id="WP_007051263.1">
    <property type="nucleotide sequence ID" value="NZ_AABM02000006.1"/>
</dbReference>
<dbReference type="SMR" id="B3DT87"/>
<dbReference type="KEGG" id="blj:BLD_0910"/>
<dbReference type="HOGENOM" id="CLU_107531_2_1_11"/>
<dbReference type="Proteomes" id="UP000002419">
    <property type="component" value="Chromosome"/>
</dbReference>
<dbReference type="GO" id="GO:0005506">
    <property type="term" value="F:iron ion binding"/>
    <property type="evidence" value="ECO:0007669"/>
    <property type="project" value="InterPro"/>
</dbReference>
<dbReference type="GO" id="GO:0043768">
    <property type="term" value="F:S-ribosylhomocysteine lyase activity"/>
    <property type="evidence" value="ECO:0007669"/>
    <property type="project" value="UniProtKB-UniRule"/>
</dbReference>
<dbReference type="GO" id="GO:0009372">
    <property type="term" value="P:quorum sensing"/>
    <property type="evidence" value="ECO:0007669"/>
    <property type="project" value="UniProtKB-UniRule"/>
</dbReference>
<dbReference type="Gene3D" id="3.30.1360.80">
    <property type="entry name" value="S-ribosylhomocysteinase (LuxS)"/>
    <property type="match status" value="1"/>
</dbReference>
<dbReference type="HAMAP" id="MF_00091">
    <property type="entry name" value="LuxS"/>
    <property type="match status" value="1"/>
</dbReference>
<dbReference type="InterPro" id="IPR037005">
    <property type="entry name" value="LuxS_sf"/>
</dbReference>
<dbReference type="InterPro" id="IPR011249">
    <property type="entry name" value="Metalloenz_LuxS/M16"/>
</dbReference>
<dbReference type="InterPro" id="IPR003815">
    <property type="entry name" value="S-ribosylhomocysteinase"/>
</dbReference>
<dbReference type="NCBIfam" id="NF002605">
    <property type="entry name" value="PRK02260.2-3"/>
    <property type="match status" value="1"/>
</dbReference>
<dbReference type="NCBIfam" id="NF002608">
    <property type="entry name" value="PRK02260.3-1"/>
    <property type="match status" value="1"/>
</dbReference>
<dbReference type="PANTHER" id="PTHR35799">
    <property type="entry name" value="S-RIBOSYLHOMOCYSTEINE LYASE"/>
    <property type="match status" value="1"/>
</dbReference>
<dbReference type="PANTHER" id="PTHR35799:SF1">
    <property type="entry name" value="S-RIBOSYLHOMOCYSTEINE LYASE"/>
    <property type="match status" value="1"/>
</dbReference>
<dbReference type="Pfam" id="PF02664">
    <property type="entry name" value="LuxS"/>
    <property type="match status" value="1"/>
</dbReference>
<dbReference type="PIRSF" id="PIRSF006160">
    <property type="entry name" value="AI2"/>
    <property type="match status" value="1"/>
</dbReference>
<dbReference type="PRINTS" id="PR01487">
    <property type="entry name" value="LUXSPROTEIN"/>
</dbReference>
<dbReference type="SUPFAM" id="SSF63411">
    <property type="entry name" value="LuxS/MPP-like metallohydrolase"/>
    <property type="match status" value="1"/>
</dbReference>
<reference key="1">
    <citation type="journal article" date="2008" name="BMC Genomics">
        <title>Comparative genomic analysis of the gut bacterium Bifidobacterium longum reveals loci susceptible to deletion during pure culture growth.</title>
        <authorList>
            <person name="Lee J.H."/>
            <person name="Karamychev V.N."/>
            <person name="Kozyavkin S.A."/>
            <person name="Mills D."/>
            <person name="Pavlov A.R."/>
            <person name="Pavlova N.V."/>
            <person name="Polouchine N.N."/>
            <person name="Richardson P.M."/>
            <person name="Shakhova V.V."/>
            <person name="Slesarev A.I."/>
            <person name="Weimer B."/>
            <person name="O'Sullivan D.J."/>
        </authorList>
    </citation>
    <scope>NUCLEOTIDE SEQUENCE [LARGE SCALE GENOMIC DNA]</scope>
    <source>
        <strain>DJO10A</strain>
    </source>
</reference>
<accession>B3DT87</accession>
<name>LUXS_BIFLD</name>
<keyword id="KW-0071">Autoinducer synthesis</keyword>
<keyword id="KW-0408">Iron</keyword>
<keyword id="KW-0456">Lyase</keyword>
<keyword id="KW-0479">Metal-binding</keyword>
<keyword id="KW-0673">Quorum sensing</keyword>
<sequence length="164" mass="18489">MAEETAEKPVVESFQLDHTKVKAPYVRYIDTETGPHGDVISNYDLRLTQPNKQAIPTGGLHTIEHTIAVLLRERIPGYIDCSPFGCRTGFHLLTWGTHPTEEVAKALKESLEFIAYKATWDDVPATTEKSCGNYRDHSLFTAKEWAKQILEEGISSDPFERKVV</sequence>
<protein>
    <recommendedName>
        <fullName evidence="1">S-ribosylhomocysteine lyase</fullName>
        <ecNumber evidence="1">4.4.1.21</ecNumber>
    </recommendedName>
    <alternativeName>
        <fullName evidence="1">AI-2 synthesis protein</fullName>
    </alternativeName>
    <alternativeName>
        <fullName evidence="1">Autoinducer-2 production protein LuxS</fullName>
    </alternativeName>
</protein>
<organism>
    <name type="scientific">Bifidobacterium longum (strain DJO10A)</name>
    <dbReference type="NCBI Taxonomy" id="205913"/>
    <lineage>
        <taxon>Bacteria</taxon>
        <taxon>Bacillati</taxon>
        <taxon>Actinomycetota</taxon>
        <taxon>Actinomycetes</taxon>
        <taxon>Bifidobacteriales</taxon>
        <taxon>Bifidobacteriaceae</taxon>
        <taxon>Bifidobacterium</taxon>
    </lineage>
</organism>
<gene>
    <name evidence="1" type="primary">luxS</name>
    <name type="ordered locus">BLD_0910</name>
</gene>